<comment type="function">
    <text evidence="2">Potassium channel regulatory subunit that modulates the delayed rectifier potassium channel activity of KCNB1 by namely slowing down the deactivation and inactivation time constants (PubMed:10484328). While it does not form functional channel on its own, it can form functional heterotetrameric channels with KCNB1 (PubMed:10484328).</text>
</comment>
<comment type="subunit">
    <text evidence="8">Heterotetramer with KCNB1 (Probable). Does not form homomultimers (Probable).</text>
</comment>
<comment type="subcellular location">
    <subcellularLocation>
        <location evidence="8">Cell membrane</location>
        <topology evidence="7">Multi-pass membrane protein</topology>
    </subcellularLocation>
    <text evidence="2">May not reach the plasma membrane but remain in an intracellular compartment in the absence of KCNB1 (PubMed:10484328).</text>
</comment>
<comment type="tissue specificity">
    <text evidence="2 4">Detected in whole normal term placental and placental chorionic plate arteries and veins. Detected in syncytiotrophoblast and in blood vessel endothelium within intermediate villi and chorionic plate (at protein level) (PubMed:22943705). Detected in most tissues, but not in peripheral blood lymphocytes. The highest levels of expression are in lung (PubMed:10484328).</text>
</comment>
<comment type="domain">
    <text evidence="1">The transmembrane segment S4 functions as a voltage-sensor and is characterized by a series of positively charged amino acids at every third position. Channel opening and closing is effected by a conformation change that affects the position and orientation of the voltage-sensor paddle formed by S3 and S4 within the membrane. A transmembrane electric field that is positive inside would push the positively charged S4 segment outwards, thereby opening the pore, while a field that is negative inside would pull the S4 segment inwards and close the pore. Changes in the position and orientation of S4 are then transmitted to the activation gate formed by the inner helix bundle via the S4-S5 linker region.</text>
</comment>
<comment type="similarity">
    <text evidence="7">Belongs to the potassium channel family. S (TC 1.A.1.2) subfamily. Kv9.3/KCNS3 sub-subfamily.</text>
</comment>
<feature type="chain" id="PRO_0000054087" description="Delayed-rectifier potassium channel regulatory subunit KCNS3">
    <location>
        <begin position="1"/>
        <end position="491"/>
    </location>
</feature>
<feature type="topological domain" description="Cytoplasmic" evidence="1">
    <location>
        <begin position="1"/>
        <end position="182"/>
    </location>
</feature>
<feature type="transmembrane region" description="Helical; Name=Segment S1" evidence="1">
    <location>
        <begin position="183"/>
        <end position="204"/>
    </location>
</feature>
<feature type="topological domain" description="Extracellular" evidence="1">
    <location>
        <begin position="205"/>
        <end position="220"/>
    </location>
</feature>
<feature type="transmembrane region" description="Helical; Name=Segment S2" evidence="1">
    <location>
        <begin position="221"/>
        <end position="243"/>
    </location>
</feature>
<feature type="topological domain" description="Cytoplasmic" evidence="1">
    <location>
        <begin position="244"/>
        <end position="254"/>
    </location>
</feature>
<feature type="transmembrane region" description="Helical; Name=Segment S3" evidence="1">
    <location>
        <begin position="255"/>
        <end position="275"/>
    </location>
</feature>
<feature type="topological domain" description="Extracellular" evidence="1">
    <location>
        <begin position="276"/>
        <end position="285"/>
    </location>
</feature>
<feature type="transmembrane region" description="Helical; Voltage-sensor; Name=Segment S4" evidence="1">
    <location>
        <begin position="286"/>
        <end position="306"/>
    </location>
</feature>
<feature type="topological domain" description="Cytoplasmic" evidence="1">
    <location>
        <begin position="307"/>
        <end position="321"/>
    </location>
</feature>
<feature type="transmembrane region" description="Helical; Name=Segment S5" evidence="1">
    <location>
        <begin position="322"/>
        <end position="343"/>
    </location>
</feature>
<feature type="topological domain" description="Extracellular" evidence="1">
    <location>
        <begin position="344"/>
        <end position="357"/>
    </location>
</feature>
<feature type="intramembrane region" description="Helical; Name=Pore helix" evidence="1">
    <location>
        <begin position="358"/>
        <end position="369"/>
    </location>
</feature>
<feature type="intramembrane region" evidence="1">
    <location>
        <begin position="370"/>
        <end position="377"/>
    </location>
</feature>
<feature type="topological domain" description="Extracellular" evidence="1">
    <location>
        <begin position="378"/>
        <end position="384"/>
    </location>
</feature>
<feature type="transmembrane region" description="Helical; Name=Segment S6" evidence="1">
    <location>
        <begin position="385"/>
        <end position="413"/>
    </location>
</feature>
<feature type="topological domain" description="Cytoplasmic" evidence="1">
    <location>
        <begin position="414"/>
        <end position="491"/>
    </location>
</feature>
<feature type="short sequence motif" description="Selectivity filter" evidence="1">
    <location>
        <begin position="370"/>
        <end position="375"/>
    </location>
</feature>
<feature type="sequence variant" id="VAR_036986" description="In dbSNP:rs17856097." evidence="3">
    <original>V</original>
    <variation>L</variation>
    <location>
        <position position="225"/>
    </location>
</feature>
<feature type="sequence variant" id="VAR_014200" description="In dbSNP:rs4832524." evidence="2 3 5">
    <original>T</original>
    <variation>A</variation>
    <location>
        <position position="450"/>
    </location>
</feature>
<feature type="sequence conflict" description="In Ref. 3; AAH15947." evidence="7" ref="3">
    <original>S</original>
    <variation>Y</variation>
    <location>
        <position position="27"/>
    </location>
</feature>
<gene>
    <name evidence="9" type="primary">KCNS3</name>
</gene>
<proteinExistence type="evidence at protein level"/>
<name>KCNS3_HUMAN</name>
<dbReference type="EMBL" id="AF043472">
    <property type="protein sequence ID" value="AAC13164.1"/>
    <property type="molecule type" value="mRNA"/>
</dbReference>
<dbReference type="EMBL" id="AK314451">
    <property type="protein sequence ID" value="BAG37059.1"/>
    <property type="molecule type" value="mRNA"/>
</dbReference>
<dbReference type="EMBL" id="AC093731">
    <property type="protein sequence ID" value="AAX88969.1"/>
    <property type="molecule type" value="Genomic_DNA"/>
</dbReference>
<dbReference type="EMBL" id="CH471053">
    <property type="protein sequence ID" value="EAX00861.1"/>
    <property type="molecule type" value="Genomic_DNA"/>
</dbReference>
<dbReference type="EMBL" id="CH471053">
    <property type="protein sequence ID" value="EAX00862.1"/>
    <property type="molecule type" value="Genomic_DNA"/>
</dbReference>
<dbReference type="EMBL" id="BC004148">
    <property type="protein sequence ID" value="AAH04148.1"/>
    <property type="molecule type" value="mRNA"/>
</dbReference>
<dbReference type="EMBL" id="BC004987">
    <property type="protein sequence ID" value="AAH04987.1"/>
    <property type="molecule type" value="mRNA"/>
</dbReference>
<dbReference type="EMBL" id="BC015947">
    <property type="protein sequence ID" value="AAH15947.1"/>
    <property type="molecule type" value="mRNA"/>
</dbReference>
<dbReference type="CCDS" id="CCDS1692.1"/>
<dbReference type="RefSeq" id="NP_001269357.1">
    <property type="nucleotide sequence ID" value="NM_001282428.2"/>
</dbReference>
<dbReference type="RefSeq" id="NP_002243.3">
    <property type="nucleotide sequence ID" value="NM_002252.4"/>
</dbReference>
<dbReference type="RefSeq" id="XP_011531127.1">
    <property type="nucleotide sequence ID" value="XM_011532825.2"/>
</dbReference>
<dbReference type="RefSeq" id="XP_016859548.1">
    <property type="nucleotide sequence ID" value="XM_017004059.1"/>
</dbReference>
<dbReference type="RefSeq" id="XP_047300211.1">
    <property type="nucleotide sequence ID" value="XM_047444255.1"/>
</dbReference>
<dbReference type="RefSeq" id="XP_054197917.1">
    <property type="nucleotide sequence ID" value="XM_054341942.1"/>
</dbReference>
<dbReference type="RefSeq" id="XP_054197918.1">
    <property type="nucleotide sequence ID" value="XM_054341943.1"/>
</dbReference>
<dbReference type="SMR" id="Q9BQ31"/>
<dbReference type="BioGRID" id="109991">
    <property type="interactions" value="76"/>
</dbReference>
<dbReference type="CORUM" id="Q9BQ31"/>
<dbReference type="FunCoup" id="Q9BQ31">
    <property type="interactions" value="94"/>
</dbReference>
<dbReference type="IntAct" id="Q9BQ31">
    <property type="interactions" value="35"/>
</dbReference>
<dbReference type="STRING" id="9606.ENSP00000385968"/>
<dbReference type="ChEMBL" id="CHEMBL2362996"/>
<dbReference type="DrugBank" id="DB00228">
    <property type="generic name" value="Enflurane"/>
</dbReference>
<dbReference type="DrugBank" id="DB01110">
    <property type="generic name" value="Miconazole"/>
</dbReference>
<dbReference type="DrugBank" id="DB01069">
    <property type="generic name" value="Promethazine"/>
</dbReference>
<dbReference type="DrugCentral" id="Q9BQ31"/>
<dbReference type="TCDB" id="1.A.1.2.15">
    <property type="family name" value="the voltage-gated ion channel (vic) superfamily"/>
</dbReference>
<dbReference type="BioMuta" id="KCNS3"/>
<dbReference type="DMDM" id="311033434"/>
<dbReference type="MassIVE" id="Q9BQ31"/>
<dbReference type="PaxDb" id="9606-ENSP00000385968"/>
<dbReference type="PeptideAtlas" id="Q9BQ31"/>
<dbReference type="Antibodypedia" id="3102">
    <property type="antibodies" value="117 antibodies from 24 providers"/>
</dbReference>
<dbReference type="DNASU" id="3790"/>
<dbReference type="Ensembl" id="ENST00000304101.9">
    <property type="protein sequence ID" value="ENSP00000305824.4"/>
    <property type="gene ID" value="ENSG00000170745.12"/>
</dbReference>
<dbReference type="Ensembl" id="ENST00000403915.5">
    <property type="protein sequence ID" value="ENSP00000385968.1"/>
    <property type="gene ID" value="ENSG00000170745.12"/>
</dbReference>
<dbReference type="GeneID" id="3790"/>
<dbReference type="KEGG" id="hsa:3790"/>
<dbReference type="MANE-Select" id="ENST00000304101.9">
    <property type="protein sequence ID" value="ENSP00000305824.4"/>
    <property type="RefSeq nucleotide sequence ID" value="NM_002252.5"/>
    <property type="RefSeq protein sequence ID" value="NP_002243.3"/>
</dbReference>
<dbReference type="UCSC" id="uc002rcv.4">
    <property type="organism name" value="human"/>
</dbReference>
<dbReference type="AGR" id="HGNC:6302"/>
<dbReference type="CTD" id="3790"/>
<dbReference type="DisGeNET" id="3790"/>
<dbReference type="GeneCards" id="KCNS3"/>
<dbReference type="HGNC" id="HGNC:6302">
    <property type="gene designation" value="KCNS3"/>
</dbReference>
<dbReference type="HPA" id="ENSG00000170745">
    <property type="expression patterns" value="Tissue enhanced (skeletal muscle, tongue)"/>
</dbReference>
<dbReference type="MIM" id="603888">
    <property type="type" value="gene"/>
</dbReference>
<dbReference type="neXtProt" id="NX_Q9BQ31"/>
<dbReference type="OpenTargets" id="ENSG00000170745"/>
<dbReference type="PharmGKB" id="PA30080"/>
<dbReference type="VEuPathDB" id="HostDB:ENSG00000170745"/>
<dbReference type="eggNOG" id="KOG3713">
    <property type="taxonomic scope" value="Eukaryota"/>
</dbReference>
<dbReference type="GeneTree" id="ENSGT00940000155979"/>
<dbReference type="HOGENOM" id="CLU_011722_4_1_1"/>
<dbReference type="InParanoid" id="Q9BQ31"/>
<dbReference type="OMA" id="CQELPYF"/>
<dbReference type="OrthoDB" id="296522at2759"/>
<dbReference type="PAN-GO" id="Q9BQ31">
    <property type="GO annotations" value="4 GO annotations based on evolutionary models"/>
</dbReference>
<dbReference type="PhylomeDB" id="Q9BQ31"/>
<dbReference type="TreeFam" id="TF313103"/>
<dbReference type="PathwayCommons" id="Q9BQ31"/>
<dbReference type="Reactome" id="R-HSA-1296072">
    <property type="pathway name" value="Voltage gated Potassium channels"/>
</dbReference>
<dbReference type="Reactome" id="R-HSA-381676">
    <property type="pathway name" value="Glucagon-like Peptide-1 (GLP1) regulates insulin secretion"/>
</dbReference>
<dbReference type="SignaLink" id="Q9BQ31"/>
<dbReference type="SIGNOR" id="Q9BQ31"/>
<dbReference type="BioGRID-ORCS" id="3790">
    <property type="hits" value="12 hits in 1151 CRISPR screens"/>
</dbReference>
<dbReference type="ChiTaRS" id="KCNS3">
    <property type="organism name" value="human"/>
</dbReference>
<dbReference type="GeneWiki" id="KCNS3"/>
<dbReference type="GenomeRNAi" id="3790"/>
<dbReference type="Pharos" id="Q9BQ31">
    <property type="development level" value="Tclin"/>
</dbReference>
<dbReference type="PRO" id="PR:Q9BQ31"/>
<dbReference type="Proteomes" id="UP000005640">
    <property type="component" value="Chromosome 2"/>
</dbReference>
<dbReference type="RNAct" id="Q9BQ31">
    <property type="molecule type" value="protein"/>
</dbReference>
<dbReference type="Bgee" id="ENSG00000170745">
    <property type="expression patterns" value="Expressed in vastus lateralis and 165 other cell types or tissues"/>
</dbReference>
<dbReference type="ExpressionAtlas" id="Q9BQ31">
    <property type="expression patterns" value="baseline and differential"/>
</dbReference>
<dbReference type="GO" id="GO:0005829">
    <property type="term" value="C:cytosol"/>
    <property type="evidence" value="ECO:0000314"/>
    <property type="project" value="HPA"/>
</dbReference>
<dbReference type="GO" id="GO:0005794">
    <property type="term" value="C:Golgi apparatus"/>
    <property type="evidence" value="ECO:0000314"/>
    <property type="project" value="HPA"/>
</dbReference>
<dbReference type="GO" id="GO:0016020">
    <property type="term" value="C:membrane"/>
    <property type="evidence" value="ECO:0000318"/>
    <property type="project" value="GO_Central"/>
</dbReference>
<dbReference type="GO" id="GO:0005886">
    <property type="term" value="C:plasma membrane"/>
    <property type="evidence" value="ECO:0000314"/>
    <property type="project" value="HPA"/>
</dbReference>
<dbReference type="GO" id="GO:0008076">
    <property type="term" value="C:voltage-gated potassium channel complex"/>
    <property type="evidence" value="ECO:0000318"/>
    <property type="project" value="GO_Central"/>
</dbReference>
<dbReference type="GO" id="GO:0005251">
    <property type="term" value="F:delayed rectifier potassium channel activity"/>
    <property type="evidence" value="ECO:0000304"/>
    <property type="project" value="ProtInc"/>
</dbReference>
<dbReference type="GO" id="GO:0015459">
    <property type="term" value="F:potassium channel regulator activity"/>
    <property type="evidence" value="ECO:0000250"/>
    <property type="project" value="UniProtKB"/>
</dbReference>
<dbReference type="GO" id="GO:0001508">
    <property type="term" value="P:action potential"/>
    <property type="evidence" value="ECO:0000318"/>
    <property type="project" value="GO_Central"/>
</dbReference>
<dbReference type="GO" id="GO:0071805">
    <property type="term" value="P:potassium ion transmembrane transport"/>
    <property type="evidence" value="ECO:0000318"/>
    <property type="project" value="GO_Central"/>
</dbReference>
<dbReference type="GO" id="GO:0006813">
    <property type="term" value="P:potassium ion transport"/>
    <property type="evidence" value="ECO:0000304"/>
    <property type="project" value="ProtInc"/>
</dbReference>
<dbReference type="GO" id="GO:0051260">
    <property type="term" value="P:protein homooligomerization"/>
    <property type="evidence" value="ECO:0007669"/>
    <property type="project" value="InterPro"/>
</dbReference>
<dbReference type="GO" id="GO:1901379">
    <property type="term" value="P:regulation of potassium ion transmembrane transport"/>
    <property type="evidence" value="ECO:0000250"/>
    <property type="project" value="UniProtKB"/>
</dbReference>
<dbReference type="CDD" id="cd18428">
    <property type="entry name" value="BTB_POZ_KCNS3"/>
    <property type="match status" value="1"/>
</dbReference>
<dbReference type="FunFam" id="1.10.287.70:FF:000005">
    <property type="entry name" value="potassium voltage-gated channel subfamily G member 1"/>
    <property type="match status" value="1"/>
</dbReference>
<dbReference type="FunFam" id="3.30.710.10:FF:000029">
    <property type="entry name" value="potassium voltage-gated channel subfamily S member 2"/>
    <property type="match status" value="1"/>
</dbReference>
<dbReference type="FunFam" id="1.20.120.350:FF:000045">
    <property type="entry name" value="Potassium voltage-gated channel subfamily S member 3"/>
    <property type="match status" value="1"/>
</dbReference>
<dbReference type="Gene3D" id="1.10.287.70">
    <property type="match status" value="1"/>
</dbReference>
<dbReference type="Gene3D" id="3.30.710.10">
    <property type="entry name" value="Potassium Channel Kv1.1, Chain A"/>
    <property type="match status" value="1"/>
</dbReference>
<dbReference type="Gene3D" id="1.20.120.350">
    <property type="entry name" value="Voltage-gated potassium channels. Chain C"/>
    <property type="match status" value="1"/>
</dbReference>
<dbReference type="InterPro" id="IPR000210">
    <property type="entry name" value="BTB/POZ_dom"/>
</dbReference>
<dbReference type="InterPro" id="IPR005821">
    <property type="entry name" value="Ion_trans_dom"/>
</dbReference>
<dbReference type="InterPro" id="IPR003968">
    <property type="entry name" value="K_chnl_volt-dep_Kv"/>
</dbReference>
<dbReference type="InterPro" id="IPR003971">
    <property type="entry name" value="K_chnl_volt-dep_Kv5/Kv9"/>
</dbReference>
<dbReference type="InterPro" id="IPR011333">
    <property type="entry name" value="SKP1/BTB/POZ_sf"/>
</dbReference>
<dbReference type="InterPro" id="IPR003131">
    <property type="entry name" value="T1-type_BTB"/>
</dbReference>
<dbReference type="InterPro" id="IPR028325">
    <property type="entry name" value="VG_K_chnl"/>
</dbReference>
<dbReference type="InterPro" id="IPR027359">
    <property type="entry name" value="Volt_channel_dom_sf"/>
</dbReference>
<dbReference type="PANTHER" id="PTHR11537:SF39">
    <property type="entry name" value="POTASSIUM VOLTAGE-GATED CHANNEL SUBFAMILY S MEMBER 3"/>
    <property type="match status" value="1"/>
</dbReference>
<dbReference type="PANTHER" id="PTHR11537">
    <property type="entry name" value="VOLTAGE-GATED POTASSIUM CHANNEL"/>
    <property type="match status" value="1"/>
</dbReference>
<dbReference type="Pfam" id="PF02214">
    <property type="entry name" value="BTB_2"/>
    <property type="match status" value="1"/>
</dbReference>
<dbReference type="Pfam" id="PF00520">
    <property type="entry name" value="Ion_trans"/>
    <property type="match status" value="1"/>
</dbReference>
<dbReference type="PRINTS" id="PR00169">
    <property type="entry name" value="KCHANNEL"/>
</dbReference>
<dbReference type="PRINTS" id="PR01494">
    <property type="entry name" value="KV9CHANNEL"/>
</dbReference>
<dbReference type="PRINTS" id="PR01491">
    <property type="entry name" value="KVCHANNEL"/>
</dbReference>
<dbReference type="SMART" id="SM00225">
    <property type="entry name" value="BTB"/>
    <property type="match status" value="1"/>
</dbReference>
<dbReference type="SUPFAM" id="SSF54695">
    <property type="entry name" value="POZ domain"/>
    <property type="match status" value="1"/>
</dbReference>
<dbReference type="SUPFAM" id="SSF81324">
    <property type="entry name" value="Voltage-gated potassium channels"/>
    <property type="match status" value="1"/>
</dbReference>
<reference key="1">
    <citation type="journal article" date="1999" name="Am. J. Physiol.">
        <title>Electrically silent potassium channel subunits from human lens epithelium.</title>
        <authorList>
            <person name="Shepard A.R."/>
            <person name="Rae J.L."/>
        </authorList>
    </citation>
    <scope>NUCLEOTIDE SEQUENCE [MRNA]</scope>
    <scope>FUNCTION</scope>
    <scope>SUBUNIT</scope>
    <scope>SUBCELLULAR LOCATION</scope>
    <scope>VARIANT ALA-450</scope>
    <source>
        <tissue>Lens epithelium</tissue>
    </source>
</reference>
<reference key="2">
    <citation type="journal article" date="2004" name="Nat. Genet.">
        <title>Complete sequencing and characterization of 21,243 full-length human cDNAs.</title>
        <authorList>
            <person name="Ota T."/>
            <person name="Suzuki Y."/>
            <person name="Nishikawa T."/>
            <person name="Otsuki T."/>
            <person name="Sugiyama T."/>
            <person name="Irie R."/>
            <person name="Wakamatsu A."/>
            <person name="Hayashi K."/>
            <person name="Sato H."/>
            <person name="Nagai K."/>
            <person name="Kimura K."/>
            <person name="Makita H."/>
            <person name="Sekine M."/>
            <person name="Obayashi M."/>
            <person name="Nishi T."/>
            <person name="Shibahara T."/>
            <person name="Tanaka T."/>
            <person name="Ishii S."/>
            <person name="Yamamoto J."/>
            <person name="Saito K."/>
            <person name="Kawai Y."/>
            <person name="Isono Y."/>
            <person name="Nakamura Y."/>
            <person name="Nagahari K."/>
            <person name="Murakami K."/>
            <person name="Yasuda T."/>
            <person name="Iwayanagi T."/>
            <person name="Wagatsuma M."/>
            <person name="Shiratori A."/>
            <person name="Sudo H."/>
            <person name="Hosoiri T."/>
            <person name="Kaku Y."/>
            <person name="Kodaira H."/>
            <person name="Kondo H."/>
            <person name="Sugawara M."/>
            <person name="Takahashi M."/>
            <person name="Kanda K."/>
            <person name="Yokoi T."/>
            <person name="Furuya T."/>
            <person name="Kikkawa E."/>
            <person name="Omura Y."/>
            <person name="Abe K."/>
            <person name="Kamihara K."/>
            <person name="Katsuta N."/>
            <person name="Sato K."/>
            <person name="Tanikawa M."/>
            <person name="Yamazaki M."/>
            <person name="Ninomiya K."/>
            <person name="Ishibashi T."/>
            <person name="Yamashita H."/>
            <person name="Murakawa K."/>
            <person name="Fujimori K."/>
            <person name="Tanai H."/>
            <person name="Kimata M."/>
            <person name="Watanabe M."/>
            <person name="Hiraoka S."/>
            <person name="Chiba Y."/>
            <person name="Ishida S."/>
            <person name="Ono Y."/>
            <person name="Takiguchi S."/>
            <person name="Watanabe S."/>
            <person name="Yosida M."/>
            <person name="Hotuta T."/>
            <person name="Kusano J."/>
            <person name="Kanehori K."/>
            <person name="Takahashi-Fujii A."/>
            <person name="Hara H."/>
            <person name="Tanase T.-O."/>
            <person name="Nomura Y."/>
            <person name="Togiya S."/>
            <person name="Komai F."/>
            <person name="Hara R."/>
            <person name="Takeuchi K."/>
            <person name="Arita M."/>
            <person name="Imose N."/>
            <person name="Musashino K."/>
            <person name="Yuuki H."/>
            <person name="Oshima A."/>
            <person name="Sasaki N."/>
            <person name="Aotsuka S."/>
            <person name="Yoshikawa Y."/>
            <person name="Matsunawa H."/>
            <person name="Ichihara T."/>
            <person name="Shiohata N."/>
            <person name="Sano S."/>
            <person name="Moriya S."/>
            <person name="Momiyama H."/>
            <person name="Satoh N."/>
            <person name="Takami S."/>
            <person name="Terashima Y."/>
            <person name="Suzuki O."/>
            <person name="Nakagawa S."/>
            <person name="Senoh A."/>
            <person name="Mizoguchi H."/>
            <person name="Goto Y."/>
            <person name="Shimizu F."/>
            <person name="Wakebe H."/>
            <person name="Hishigaki H."/>
            <person name="Watanabe T."/>
            <person name="Sugiyama A."/>
            <person name="Takemoto M."/>
            <person name="Kawakami B."/>
            <person name="Yamazaki M."/>
            <person name="Watanabe K."/>
            <person name="Kumagai A."/>
            <person name="Itakura S."/>
            <person name="Fukuzumi Y."/>
            <person name="Fujimori Y."/>
            <person name="Komiyama M."/>
            <person name="Tashiro H."/>
            <person name="Tanigami A."/>
            <person name="Fujiwara T."/>
            <person name="Ono T."/>
            <person name="Yamada K."/>
            <person name="Fujii Y."/>
            <person name="Ozaki K."/>
            <person name="Hirao M."/>
            <person name="Ohmori Y."/>
            <person name="Kawabata A."/>
            <person name="Hikiji T."/>
            <person name="Kobatake N."/>
            <person name="Inagaki H."/>
            <person name="Ikema Y."/>
            <person name="Okamoto S."/>
            <person name="Okitani R."/>
            <person name="Kawakami T."/>
            <person name="Noguchi S."/>
            <person name="Itoh T."/>
            <person name="Shigeta K."/>
            <person name="Senba T."/>
            <person name="Matsumura K."/>
            <person name="Nakajima Y."/>
            <person name="Mizuno T."/>
            <person name="Morinaga M."/>
            <person name="Sasaki M."/>
            <person name="Togashi T."/>
            <person name="Oyama M."/>
            <person name="Hata H."/>
            <person name="Watanabe M."/>
            <person name="Komatsu T."/>
            <person name="Mizushima-Sugano J."/>
            <person name="Satoh T."/>
            <person name="Shirai Y."/>
            <person name="Takahashi Y."/>
            <person name="Nakagawa K."/>
            <person name="Okumura K."/>
            <person name="Nagase T."/>
            <person name="Nomura N."/>
            <person name="Kikuchi H."/>
            <person name="Masuho Y."/>
            <person name="Yamashita R."/>
            <person name="Nakai K."/>
            <person name="Yada T."/>
            <person name="Nakamura Y."/>
            <person name="Ohara O."/>
            <person name="Isogai T."/>
            <person name="Sugano S."/>
        </authorList>
    </citation>
    <scope>NUCLEOTIDE SEQUENCE [LARGE SCALE MRNA]</scope>
</reference>
<reference key="3">
    <citation type="journal article" date="2005" name="Nature">
        <title>Generation and annotation of the DNA sequences of human chromosomes 2 and 4.</title>
        <authorList>
            <person name="Hillier L.W."/>
            <person name="Graves T.A."/>
            <person name="Fulton R.S."/>
            <person name="Fulton L.A."/>
            <person name="Pepin K.H."/>
            <person name="Minx P."/>
            <person name="Wagner-McPherson C."/>
            <person name="Layman D."/>
            <person name="Wylie K."/>
            <person name="Sekhon M."/>
            <person name="Becker M.C."/>
            <person name="Fewell G.A."/>
            <person name="Delehaunty K.D."/>
            <person name="Miner T.L."/>
            <person name="Nash W.E."/>
            <person name="Kremitzki C."/>
            <person name="Oddy L."/>
            <person name="Du H."/>
            <person name="Sun H."/>
            <person name="Bradshaw-Cordum H."/>
            <person name="Ali J."/>
            <person name="Carter J."/>
            <person name="Cordes M."/>
            <person name="Harris A."/>
            <person name="Isak A."/>
            <person name="van Brunt A."/>
            <person name="Nguyen C."/>
            <person name="Du F."/>
            <person name="Courtney L."/>
            <person name="Kalicki J."/>
            <person name="Ozersky P."/>
            <person name="Abbott S."/>
            <person name="Armstrong J."/>
            <person name="Belter E.A."/>
            <person name="Caruso L."/>
            <person name="Cedroni M."/>
            <person name="Cotton M."/>
            <person name="Davidson T."/>
            <person name="Desai A."/>
            <person name="Elliott G."/>
            <person name="Erb T."/>
            <person name="Fronick C."/>
            <person name="Gaige T."/>
            <person name="Haakenson W."/>
            <person name="Haglund K."/>
            <person name="Holmes A."/>
            <person name="Harkins R."/>
            <person name="Kim K."/>
            <person name="Kruchowski S.S."/>
            <person name="Strong C.M."/>
            <person name="Grewal N."/>
            <person name="Goyea E."/>
            <person name="Hou S."/>
            <person name="Levy A."/>
            <person name="Martinka S."/>
            <person name="Mead K."/>
            <person name="McLellan M.D."/>
            <person name="Meyer R."/>
            <person name="Randall-Maher J."/>
            <person name="Tomlinson C."/>
            <person name="Dauphin-Kohlberg S."/>
            <person name="Kozlowicz-Reilly A."/>
            <person name="Shah N."/>
            <person name="Swearengen-Shahid S."/>
            <person name="Snider J."/>
            <person name="Strong J.T."/>
            <person name="Thompson J."/>
            <person name="Yoakum M."/>
            <person name="Leonard S."/>
            <person name="Pearman C."/>
            <person name="Trani L."/>
            <person name="Radionenko M."/>
            <person name="Waligorski J.E."/>
            <person name="Wang C."/>
            <person name="Rock S.M."/>
            <person name="Tin-Wollam A.-M."/>
            <person name="Maupin R."/>
            <person name="Latreille P."/>
            <person name="Wendl M.C."/>
            <person name="Yang S.-P."/>
            <person name="Pohl C."/>
            <person name="Wallis J.W."/>
            <person name="Spieth J."/>
            <person name="Bieri T.A."/>
            <person name="Berkowicz N."/>
            <person name="Nelson J.O."/>
            <person name="Osborne J."/>
            <person name="Ding L."/>
            <person name="Meyer R."/>
            <person name="Sabo A."/>
            <person name="Shotland Y."/>
            <person name="Sinha P."/>
            <person name="Wohldmann P.E."/>
            <person name="Cook L.L."/>
            <person name="Hickenbotham M.T."/>
            <person name="Eldred J."/>
            <person name="Williams D."/>
            <person name="Jones T.A."/>
            <person name="She X."/>
            <person name="Ciccarelli F.D."/>
            <person name="Izaurralde E."/>
            <person name="Taylor J."/>
            <person name="Schmutz J."/>
            <person name="Myers R.M."/>
            <person name="Cox D.R."/>
            <person name="Huang X."/>
            <person name="McPherson J.D."/>
            <person name="Mardis E.R."/>
            <person name="Clifton S.W."/>
            <person name="Warren W.C."/>
            <person name="Chinwalla A.T."/>
            <person name="Eddy S.R."/>
            <person name="Marra M.A."/>
            <person name="Ovcharenko I."/>
            <person name="Furey T.S."/>
            <person name="Miller W."/>
            <person name="Eichler E.E."/>
            <person name="Bork P."/>
            <person name="Suyama M."/>
            <person name="Torrents D."/>
            <person name="Waterston R.H."/>
            <person name="Wilson R.K."/>
        </authorList>
    </citation>
    <scope>NUCLEOTIDE SEQUENCE [LARGE SCALE GENOMIC DNA]</scope>
</reference>
<reference key="4">
    <citation type="submission" date="2005-09" db="EMBL/GenBank/DDBJ databases">
        <authorList>
            <person name="Mural R.J."/>
            <person name="Istrail S."/>
            <person name="Sutton G.G."/>
            <person name="Florea L."/>
            <person name="Halpern A.L."/>
            <person name="Mobarry C.M."/>
            <person name="Lippert R."/>
            <person name="Walenz B."/>
            <person name="Shatkay H."/>
            <person name="Dew I."/>
            <person name="Miller J.R."/>
            <person name="Flanigan M.J."/>
            <person name="Edwards N.J."/>
            <person name="Bolanos R."/>
            <person name="Fasulo D."/>
            <person name="Halldorsson B.V."/>
            <person name="Hannenhalli S."/>
            <person name="Turner R."/>
            <person name="Yooseph S."/>
            <person name="Lu F."/>
            <person name="Nusskern D.R."/>
            <person name="Shue B.C."/>
            <person name="Zheng X.H."/>
            <person name="Zhong F."/>
            <person name="Delcher A.L."/>
            <person name="Huson D.H."/>
            <person name="Kravitz S.A."/>
            <person name="Mouchard L."/>
            <person name="Reinert K."/>
            <person name="Remington K.A."/>
            <person name="Clark A.G."/>
            <person name="Waterman M.S."/>
            <person name="Eichler E.E."/>
            <person name="Adams M.D."/>
            <person name="Hunkapiller M.W."/>
            <person name="Myers E.W."/>
            <person name="Venter J.C."/>
        </authorList>
    </citation>
    <scope>NUCLEOTIDE SEQUENCE [LARGE SCALE GENOMIC DNA]</scope>
    <scope>VARIANT ALA-450</scope>
</reference>
<reference key="5">
    <citation type="journal article" date="2004" name="Genome Res.">
        <title>The status, quality, and expansion of the NIH full-length cDNA project: the Mammalian Gene Collection (MGC).</title>
        <authorList>
            <consortium name="The MGC Project Team"/>
        </authorList>
    </citation>
    <scope>NUCLEOTIDE SEQUENCE [LARGE SCALE MRNA]</scope>
    <scope>VARIANTS LEU-225 AND ALA-450</scope>
    <source>
        <tissue>Kidney</tissue>
        <tissue>Skin</tissue>
    </source>
</reference>
<reference key="6">
    <citation type="journal article" date="2012" name="J. Obstet. Gynaecol.">
        <title>Expression of an electrically silent voltage-gated potassium channel in the human placenta.</title>
        <authorList>
            <person name="Fyfe G.K."/>
            <person name="Panicker S."/>
            <person name="Jones R.L."/>
            <person name="Wareing M."/>
        </authorList>
    </citation>
    <scope>TISSUE SPECIFICITY</scope>
</reference>
<evidence type="ECO:0000250" key="1">
    <source>
        <dbReference type="UniProtKB" id="P63142"/>
    </source>
</evidence>
<evidence type="ECO:0000269" key="2">
    <source>
    </source>
</evidence>
<evidence type="ECO:0000269" key="3">
    <source>
    </source>
</evidence>
<evidence type="ECO:0000269" key="4">
    <source>
    </source>
</evidence>
<evidence type="ECO:0000269" key="5">
    <source ref="4"/>
</evidence>
<evidence type="ECO:0000303" key="6">
    <source>
    </source>
</evidence>
<evidence type="ECO:0000305" key="7"/>
<evidence type="ECO:0000305" key="8">
    <source>
    </source>
</evidence>
<evidence type="ECO:0000312" key="9">
    <source>
        <dbReference type="HGNC" id="HGNC:6302"/>
    </source>
</evidence>
<organism>
    <name type="scientific">Homo sapiens</name>
    <name type="common">Human</name>
    <dbReference type="NCBI Taxonomy" id="9606"/>
    <lineage>
        <taxon>Eukaryota</taxon>
        <taxon>Metazoa</taxon>
        <taxon>Chordata</taxon>
        <taxon>Craniata</taxon>
        <taxon>Vertebrata</taxon>
        <taxon>Euteleostomi</taxon>
        <taxon>Mammalia</taxon>
        <taxon>Eutheria</taxon>
        <taxon>Euarchontoglires</taxon>
        <taxon>Primates</taxon>
        <taxon>Haplorrhini</taxon>
        <taxon>Catarrhini</taxon>
        <taxon>Hominidae</taxon>
        <taxon>Homo</taxon>
    </lineage>
</organism>
<protein>
    <recommendedName>
        <fullName evidence="7">Delayed-rectifier potassium channel regulatory subunit KCNS3</fullName>
    </recommendedName>
    <alternativeName>
        <fullName>Delayed-rectifier K(+) channel alpha subunit 3</fullName>
    </alternativeName>
    <alternativeName>
        <fullName evidence="6">Delayed-rectifier potassium channel subunit Kv9.3</fullName>
        <shortName evidence="6">Kv9.3</shortName>
    </alternativeName>
    <alternativeName>
        <fullName>Potassium voltage-gated channel subfamily S member 3</fullName>
    </alternativeName>
</protein>
<accession>Q9BQ31</accession>
<accession>D6W520</accession>
<accession>O43651</accession>
<accession>Q4ZFY1</accession>
<accession>Q96B56</accession>
<sequence>MVFGEFFHRPGQDEELVNLNVGGFKQSVDQSTLLRFPHTRLGKLLTCHSEEAILELCDDYSVADKEYYFDRNPSLFRYVLNFYYTGKLHVMEELCVFSFCQEIEYWGINELFIDSCCSNRYQERKEENHEKDWDQKSHDVSTDSSFEESSLFEKELEKFDTLRFGQLRKKIWIRMENPAYCLSAKLIAISSLSVVLASIVAMCVHSMSEFQNEDGEVDDPVLEGVEIACIAWFTGELAVRLAAAPCQKKFWKNPLNIIDFVSIIPFYATLAVDTKEEESEDIENMGKVVQILRLMRIFRILKLARHSVGLRSLGATLRHSYHEVGLLLLFLSVGISIFSVLIYSVEKDDHTSSLTSIPICWWWATISMTTVGYGDTHPVTLAGKLIASTCIICGILVVALPITIIFNKFSKYYQKQKDIDVDQCSEDAPEKCHELPYFNIRDIYAQRMHTFITSLSSVGIVVSDPDSTDASSIEDNEDICNTTSLENCTAK</sequence>
<keyword id="KW-1003">Cell membrane</keyword>
<keyword id="KW-0407">Ion channel</keyword>
<keyword id="KW-0406">Ion transport</keyword>
<keyword id="KW-0472">Membrane</keyword>
<keyword id="KW-0630">Potassium</keyword>
<keyword id="KW-0631">Potassium channel</keyword>
<keyword id="KW-0633">Potassium transport</keyword>
<keyword id="KW-1267">Proteomics identification</keyword>
<keyword id="KW-1185">Reference proteome</keyword>
<keyword id="KW-0812">Transmembrane</keyword>
<keyword id="KW-1133">Transmembrane helix</keyword>
<keyword id="KW-0813">Transport</keyword>
<keyword id="KW-0851">Voltage-gated channel</keyword>